<proteinExistence type="inferred from homology"/>
<name>PLSX_STAEQ</name>
<comment type="function">
    <text evidence="1">Catalyzes the reversible formation of acyl-phosphate (acyl-PO(4)) from acyl-[acyl-carrier-protein] (acyl-ACP). This enzyme utilizes acyl-ACP as fatty acyl donor, but not acyl-CoA.</text>
</comment>
<comment type="catalytic activity">
    <reaction evidence="1">
        <text>a fatty acyl-[ACP] + phosphate = an acyl phosphate + holo-[ACP]</text>
        <dbReference type="Rhea" id="RHEA:42292"/>
        <dbReference type="Rhea" id="RHEA-COMP:9685"/>
        <dbReference type="Rhea" id="RHEA-COMP:14125"/>
        <dbReference type="ChEBI" id="CHEBI:43474"/>
        <dbReference type="ChEBI" id="CHEBI:59918"/>
        <dbReference type="ChEBI" id="CHEBI:64479"/>
        <dbReference type="ChEBI" id="CHEBI:138651"/>
        <dbReference type="EC" id="2.3.1.274"/>
    </reaction>
</comment>
<comment type="pathway">
    <text evidence="1">Lipid metabolism; phospholipid metabolism.</text>
</comment>
<comment type="subunit">
    <text evidence="1">Homodimer. Probably interacts with PlsY.</text>
</comment>
<comment type="subcellular location">
    <subcellularLocation>
        <location evidence="1">Cytoplasm</location>
    </subcellularLocation>
    <text evidence="1">Associated with the membrane possibly through PlsY.</text>
</comment>
<comment type="similarity">
    <text evidence="1">Belongs to the PlsX family.</text>
</comment>
<dbReference type="EC" id="2.3.1.274" evidence="1"/>
<dbReference type="EMBL" id="CP000029">
    <property type="protein sequence ID" value="AAW54118.1"/>
    <property type="molecule type" value="Genomic_DNA"/>
</dbReference>
<dbReference type="RefSeq" id="WP_002457382.1">
    <property type="nucleotide sequence ID" value="NC_002976.3"/>
</dbReference>
<dbReference type="SMR" id="Q5HPW2"/>
<dbReference type="STRING" id="176279.SERP0795"/>
<dbReference type="KEGG" id="ser:SERP0795"/>
<dbReference type="eggNOG" id="COG0416">
    <property type="taxonomic scope" value="Bacteria"/>
</dbReference>
<dbReference type="HOGENOM" id="CLU_039379_1_1_9"/>
<dbReference type="UniPathway" id="UPA00085"/>
<dbReference type="Proteomes" id="UP000000531">
    <property type="component" value="Chromosome"/>
</dbReference>
<dbReference type="GO" id="GO:0005737">
    <property type="term" value="C:cytoplasm"/>
    <property type="evidence" value="ECO:0007669"/>
    <property type="project" value="UniProtKB-SubCell"/>
</dbReference>
<dbReference type="GO" id="GO:0043811">
    <property type="term" value="F:phosphate:acyl-[acyl carrier protein] acyltransferase activity"/>
    <property type="evidence" value="ECO:0007669"/>
    <property type="project" value="UniProtKB-UniRule"/>
</dbReference>
<dbReference type="GO" id="GO:0006633">
    <property type="term" value="P:fatty acid biosynthetic process"/>
    <property type="evidence" value="ECO:0007669"/>
    <property type="project" value="UniProtKB-UniRule"/>
</dbReference>
<dbReference type="GO" id="GO:0008654">
    <property type="term" value="P:phospholipid biosynthetic process"/>
    <property type="evidence" value="ECO:0007669"/>
    <property type="project" value="UniProtKB-KW"/>
</dbReference>
<dbReference type="Gene3D" id="3.40.718.10">
    <property type="entry name" value="Isopropylmalate Dehydrogenase"/>
    <property type="match status" value="1"/>
</dbReference>
<dbReference type="HAMAP" id="MF_00019">
    <property type="entry name" value="PlsX"/>
    <property type="match status" value="1"/>
</dbReference>
<dbReference type="InterPro" id="IPR003664">
    <property type="entry name" value="FA_synthesis"/>
</dbReference>
<dbReference type="InterPro" id="IPR012281">
    <property type="entry name" value="Phospholipid_synth_PlsX-like"/>
</dbReference>
<dbReference type="NCBIfam" id="TIGR00182">
    <property type="entry name" value="plsX"/>
    <property type="match status" value="1"/>
</dbReference>
<dbReference type="PANTHER" id="PTHR30100">
    <property type="entry name" value="FATTY ACID/PHOSPHOLIPID SYNTHESIS PROTEIN PLSX"/>
    <property type="match status" value="1"/>
</dbReference>
<dbReference type="PANTHER" id="PTHR30100:SF1">
    <property type="entry name" value="PHOSPHATE ACYLTRANSFERASE"/>
    <property type="match status" value="1"/>
</dbReference>
<dbReference type="Pfam" id="PF02504">
    <property type="entry name" value="FA_synthesis"/>
    <property type="match status" value="1"/>
</dbReference>
<dbReference type="PIRSF" id="PIRSF002465">
    <property type="entry name" value="Phsphlp_syn_PlsX"/>
    <property type="match status" value="1"/>
</dbReference>
<dbReference type="SUPFAM" id="SSF53659">
    <property type="entry name" value="Isocitrate/Isopropylmalate dehydrogenase-like"/>
    <property type="match status" value="1"/>
</dbReference>
<feature type="chain" id="PRO_0000189942" description="Phosphate acyltransferase">
    <location>
        <begin position="1"/>
        <end position="325"/>
    </location>
</feature>
<evidence type="ECO:0000255" key="1">
    <source>
        <dbReference type="HAMAP-Rule" id="MF_00019"/>
    </source>
</evidence>
<sequence length="325" mass="34934">MVKIAVDMMGGDDAPGIVLDAVKKAVEDFKDLEIILFGDESQYNLSHERIEFRHCTEKIEMEDEPVRAIKRKKDSSMVKMAEAVKSGEADGCVSAGNTGALMSAGLFIVGRIKGVARPALVVTLPTTDGKGFVFLDVGANADAKAEHLLQYAQLGNIYAQKIRGIQNPSVSLLNIGTEAAKGNSLTKKAYDLFEKNQSFNFTGNIEAKTLMDGNVDVVVTDGYTGNMVLKNLEGTAKSIGKMLKETIMSSFKNKLAGAVLKKDLDTFAKKMDYSEYGGSVLLGLDGTVVKAHGSSNAKAFYSAIRQAKIAGEENIVQIMKDTVGE</sequence>
<organism>
    <name type="scientific">Staphylococcus epidermidis (strain ATCC 35984 / DSM 28319 / BCRC 17069 / CCUG 31568 / BM 3577 / RP62A)</name>
    <dbReference type="NCBI Taxonomy" id="176279"/>
    <lineage>
        <taxon>Bacteria</taxon>
        <taxon>Bacillati</taxon>
        <taxon>Bacillota</taxon>
        <taxon>Bacilli</taxon>
        <taxon>Bacillales</taxon>
        <taxon>Staphylococcaceae</taxon>
        <taxon>Staphylococcus</taxon>
    </lineage>
</organism>
<reference key="1">
    <citation type="journal article" date="2005" name="J. Bacteriol.">
        <title>Insights on evolution of virulence and resistance from the complete genome analysis of an early methicillin-resistant Staphylococcus aureus strain and a biofilm-producing methicillin-resistant Staphylococcus epidermidis strain.</title>
        <authorList>
            <person name="Gill S.R."/>
            <person name="Fouts D.E."/>
            <person name="Archer G.L."/>
            <person name="Mongodin E.F."/>
            <person name="DeBoy R.T."/>
            <person name="Ravel J."/>
            <person name="Paulsen I.T."/>
            <person name="Kolonay J.F."/>
            <person name="Brinkac L.M."/>
            <person name="Beanan M.J."/>
            <person name="Dodson R.J."/>
            <person name="Daugherty S.C."/>
            <person name="Madupu R."/>
            <person name="Angiuoli S.V."/>
            <person name="Durkin A.S."/>
            <person name="Haft D.H."/>
            <person name="Vamathevan J.J."/>
            <person name="Khouri H."/>
            <person name="Utterback T.R."/>
            <person name="Lee C."/>
            <person name="Dimitrov G."/>
            <person name="Jiang L."/>
            <person name="Qin H."/>
            <person name="Weidman J."/>
            <person name="Tran K."/>
            <person name="Kang K.H."/>
            <person name="Hance I.R."/>
            <person name="Nelson K.E."/>
            <person name="Fraser C.M."/>
        </authorList>
    </citation>
    <scope>NUCLEOTIDE SEQUENCE [LARGE SCALE GENOMIC DNA]</scope>
    <source>
        <strain>ATCC 35984 / DSM 28319 / BCRC 17069 / CCUG 31568 / BM 3577 / RP62A</strain>
    </source>
</reference>
<accession>Q5HPW2</accession>
<gene>
    <name evidence="1" type="primary">plsX</name>
    <name type="ordered locus">SERP0795</name>
</gene>
<protein>
    <recommendedName>
        <fullName evidence="1">Phosphate acyltransferase</fullName>
        <ecNumber evidence="1">2.3.1.274</ecNumber>
    </recommendedName>
    <alternativeName>
        <fullName evidence="1">Acyl-ACP phosphotransacylase</fullName>
    </alternativeName>
    <alternativeName>
        <fullName evidence="1">Acyl-[acyl-carrier-protein]--phosphate acyltransferase</fullName>
    </alternativeName>
    <alternativeName>
        <fullName evidence="1">Phosphate-acyl-ACP acyltransferase</fullName>
    </alternativeName>
</protein>
<keyword id="KW-0963">Cytoplasm</keyword>
<keyword id="KW-0444">Lipid biosynthesis</keyword>
<keyword id="KW-0443">Lipid metabolism</keyword>
<keyword id="KW-0594">Phospholipid biosynthesis</keyword>
<keyword id="KW-1208">Phospholipid metabolism</keyword>
<keyword id="KW-1185">Reference proteome</keyword>
<keyword id="KW-0808">Transferase</keyword>